<organism>
    <name type="scientific">Xanthomonas campestris pv. campestris (strain 8004)</name>
    <dbReference type="NCBI Taxonomy" id="314565"/>
    <lineage>
        <taxon>Bacteria</taxon>
        <taxon>Pseudomonadati</taxon>
        <taxon>Pseudomonadota</taxon>
        <taxon>Gammaproteobacteria</taxon>
        <taxon>Lysobacterales</taxon>
        <taxon>Lysobacteraceae</taxon>
        <taxon>Xanthomonas</taxon>
    </lineage>
</organism>
<comment type="function">
    <text evidence="1">NDH-1 shuttles electrons from NADH, via FMN and iron-sulfur (Fe-S) centers, to quinones in the respiratory chain. The immediate electron acceptor for the enzyme in this species is believed to be ubiquinone. Couples the redox reaction to proton translocation (for every two electrons transferred, four hydrogen ions are translocated across the cytoplasmic membrane), and thus conserves the redox energy in a proton gradient.</text>
</comment>
<comment type="catalytic activity">
    <reaction evidence="1">
        <text>a quinone + NADH + 5 H(+)(in) = a quinol + NAD(+) + 4 H(+)(out)</text>
        <dbReference type="Rhea" id="RHEA:57888"/>
        <dbReference type="ChEBI" id="CHEBI:15378"/>
        <dbReference type="ChEBI" id="CHEBI:24646"/>
        <dbReference type="ChEBI" id="CHEBI:57540"/>
        <dbReference type="ChEBI" id="CHEBI:57945"/>
        <dbReference type="ChEBI" id="CHEBI:132124"/>
    </reaction>
</comment>
<comment type="cofactor">
    <cofactor evidence="1">
        <name>[4Fe-4S] cluster</name>
        <dbReference type="ChEBI" id="CHEBI:49883"/>
    </cofactor>
    <text evidence="1">Binds 2 [4Fe-4S] clusters per subunit.</text>
</comment>
<comment type="subunit">
    <text evidence="1">NDH-1 is composed of 14 different subunits. Subunits NuoA, H, J, K, L, M, N constitute the membrane sector of the complex.</text>
</comment>
<comment type="subcellular location">
    <subcellularLocation>
        <location evidence="1">Cell inner membrane</location>
        <topology evidence="1">Peripheral membrane protein</topology>
    </subcellularLocation>
</comment>
<comment type="similarity">
    <text evidence="1">Belongs to the complex I 23 kDa subunit family.</text>
</comment>
<keyword id="KW-0004">4Fe-4S</keyword>
<keyword id="KW-0997">Cell inner membrane</keyword>
<keyword id="KW-1003">Cell membrane</keyword>
<keyword id="KW-0408">Iron</keyword>
<keyword id="KW-0411">Iron-sulfur</keyword>
<keyword id="KW-0472">Membrane</keyword>
<keyword id="KW-0479">Metal-binding</keyword>
<keyword id="KW-0520">NAD</keyword>
<keyword id="KW-0874">Quinone</keyword>
<keyword id="KW-0677">Repeat</keyword>
<keyword id="KW-1278">Translocase</keyword>
<keyword id="KW-0830">Ubiquinone</keyword>
<sequence length="163" mass="18883">MMNKITHYFKSLLLLELLGGLWLTLKYTFKPKYTVLYPMEKFPQSPRFRGLHALRRYPNGEERCIACKLCEAVCPALAITIDSAKREDGTRRTTRYDIDLFKCIFCGFCEESCPVDSIVETHILEYHFEKRGENIVNKPQLLAIGDRLEAEIAERRAADAAFR</sequence>
<feature type="chain" id="PRO_0000250952" description="NADH-quinone oxidoreductase subunit I">
    <location>
        <begin position="1"/>
        <end position="163"/>
    </location>
</feature>
<feature type="domain" description="4Fe-4S ferredoxin-type 1" evidence="1">
    <location>
        <begin position="54"/>
        <end position="84"/>
    </location>
</feature>
<feature type="domain" description="4Fe-4S ferredoxin-type 2" evidence="1">
    <location>
        <begin position="94"/>
        <end position="123"/>
    </location>
</feature>
<feature type="binding site" evidence="1">
    <location>
        <position position="64"/>
    </location>
    <ligand>
        <name>[4Fe-4S] cluster</name>
        <dbReference type="ChEBI" id="CHEBI:49883"/>
        <label>1</label>
    </ligand>
</feature>
<feature type="binding site" evidence="1">
    <location>
        <position position="67"/>
    </location>
    <ligand>
        <name>[4Fe-4S] cluster</name>
        <dbReference type="ChEBI" id="CHEBI:49883"/>
        <label>1</label>
    </ligand>
</feature>
<feature type="binding site" evidence="1">
    <location>
        <position position="70"/>
    </location>
    <ligand>
        <name>[4Fe-4S] cluster</name>
        <dbReference type="ChEBI" id="CHEBI:49883"/>
        <label>1</label>
    </ligand>
</feature>
<feature type="binding site" evidence="1">
    <location>
        <position position="74"/>
    </location>
    <ligand>
        <name>[4Fe-4S] cluster</name>
        <dbReference type="ChEBI" id="CHEBI:49883"/>
        <label>2</label>
    </ligand>
</feature>
<feature type="binding site" evidence="1">
    <location>
        <position position="103"/>
    </location>
    <ligand>
        <name>[4Fe-4S] cluster</name>
        <dbReference type="ChEBI" id="CHEBI:49883"/>
        <label>2</label>
    </ligand>
</feature>
<feature type="binding site" evidence="1">
    <location>
        <position position="106"/>
    </location>
    <ligand>
        <name>[4Fe-4S] cluster</name>
        <dbReference type="ChEBI" id="CHEBI:49883"/>
        <label>2</label>
    </ligand>
</feature>
<feature type="binding site" evidence="1">
    <location>
        <position position="109"/>
    </location>
    <ligand>
        <name>[4Fe-4S] cluster</name>
        <dbReference type="ChEBI" id="CHEBI:49883"/>
        <label>2</label>
    </ligand>
</feature>
<feature type="binding site" evidence="1">
    <location>
        <position position="113"/>
    </location>
    <ligand>
        <name>[4Fe-4S] cluster</name>
        <dbReference type="ChEBI" id="CHEBI:49883"/>
        <label>1</label>
    </ligand>
</feature>
<accession>Q4UWB0</accession>
<dbReference type="EC" id="7.1.1.-" evidence="1"/>
<dbReference type="EMBL" id="CP000050">
    <property type="protein sequence ID" value="AAY48663.1"/>
    <property type="molecule type" value="Genomic_DNA"/>
</dbReference>
<dbReference type="SMR" id="Q4UWB0"/>
<dbReference type="KEGG" id="xcb:XC_1597"/>
<dbReference type="HOGENOM" id="CLU_067218_5_1_6"/>
<dbReference type="Proteomes" id="UP000000420">
    <property type="component" value="Chromosome"/>
</dbReference>
<dbReference type="GO" id="GO:0005886">
    <property type="term" value="C:plasma membrane"/>
    <property type="evidence" value="ECO:0007669"/>
    <property type="project" value="UniProtKB-SubCell"/>
</dbReference>
<dbReference type="GO" id="GO:0051539">
    <property type="term" value="F:4 iron, 4 sulfur cluster binding"/>
    <property type="evidence" value="ECO:0007669"/>
    <property type="project" value="UniProtKB-KW"/>
</dbReference>
<dbReference type="GO" id="GO:0005506">
    <property type="term" value="F:iron ion binding"/>
    <property type="evidence" value="ECO:0007669"/>
    <property type="project" value="UniProtKB-UniRule"/>
</dbReference>
<dbReference type="GO" id="GO:0050136">
    <property type="term" value="F:NADH:ubiquinone reductase (non-electrogenic) activity"/>
    <property type="evidence" value="ECO:0007669"/>
    <property type="project" value="UniProtKB-UniRule"/>
</dbReference>
<dbReference type="GO" id="GO:0048038">
    <property type="term" value="F:quinone binding"/>
    <property type="evidence" value="ECO:0007669"/>
    <property type="project" value="UniProtKB-KW"/>
</dbReference>
<dbReference type="GO" id="GO:0009060">
    <property type="term" value="P:aerobic respiration"/>
    <property type="evidence" value="ECO:0007669"/>
    <property type="project" value="TreeGrafter"/>
</dbReference>
<dbReference type="FunFam" id="3.30.70.3270:FF:000003">
    <property type="entry name" value="NADH-quinone oxidoreductase subunit I"/>
    <property type="match status" value="1"/>
</dbReference>
<dbReference type="Gene3D" id="3.30.70.3270">
    <property type="match status" value="1"/>
</dbReference>
<dbReference type="HAMAP" id="MF_01351">
    <property type="entry name" value="NDH1_NuoI"/>
    <property type="match status" value="1"/>
</dbReference>
<dbReference type="InterPro" id="IPR017896">
    <property type="entry name" value="4Fe4S_Fe-S-bd"/>
</dbReference>
<dbReference type="InterPro" id="IPR017900">
    <property type="entry name" value="4Fe4S_Fe_S_CS"/>
</dbReference>
<dbReference type="InterPro" id="IPR010226">
    <property type="entry name" value="NADH_quinone_OxRdtase_chainI"/>
</dbReference>
<dbReference type="NCBIfam" id="TIGR01971">
    <property type="entry name" value="NuoI"/>
    <property type="match status" value="1"/>
</dbReference>
<dbReference type="NCBIfam" id="NF004538">
    <property type="entry name" value="PRK05888.1-4"/>
    <property type="match status" value="1"/>
</dbReference>
<dbReference type="NCBIfam" id="NF004539">
    <property type="entry name" value="PRK05888.1-5"/>
    <property type="match status" value="1"/>
</dbReference>
<dbReference type="PANTHER" id="PTHR10849:SF20">
    <property type="entry name" value="NADH DEHYDROGENASE [UBIQUINONE] IRON-SULFUR PROTEIN 8, MITOCHONDRIAL"/>
    <property type="match status" value="1"/>
</dbReference>
<dbReference type="PANTHER" id="PTHR10849">
    <property type="entry name" value="NADH DEHYDROGENASE UBIQUINONE IRON-SULFUR PROTEIN 8, MITOCHONDRIAL"/>
    <property type="match status" value="1"/>
</dbReference>
<dbReference type="Pfam" id="PF12838">
    <property type="entry name" value="Fer4_7"/>
    <property type="match status" value="1"/>
</dbReference>
<dbReference type="SUPFAM" id="SSF54862">
    <property type="entry name" value="4Fe-4S ferredoxins"/>
    <property type="match status" value="1"/>
</dbReference>
<dbReference type="PROSITE" id="PS00198">
    <property type="entry name" value="4FE4S_FER_1"/>
    <property type="match status" value="2"/>
</dbReference>
<dbReference type="PROSITE" id="PS51379">
    <property type="entry name" value="4FE4S_FER_2"/>
    <property type="match status" value="2"/>
</dbReference>
<proteinExistence type="inferred from homology"/>
<reference key="1">
    <citation type="journal article" date="2005" name="Genome Res.">
        <title>Comparative and functional genomic analyses of the pathogenicity of phytopathogen Xanthomonas campestris pv. campestris.</title>
        <authorList>
            <person name="Qian W."/>
            <person name="Jia Y."/>
            <person name="Ren S.-X."/>
            <person name="He Y.-Q."/>
            <person name="Feng J.-X."/>
            <person name="Lu L.-F."/>
            <person name="Sun Q."/>
            <person name="Ying G."/>
            <person name="Tang D.-J."/>
            <person name="Tang H."/>
            <person name="Wu W."/>
            <person name="Hao P."/>
            <person name="Wang L."/>
            <person name="Jiang B.-L."/>
            <person name="Zeng S."/>
            <person name="Gu W.-Y."/>
            <person name="Lu G."/>
            <person name="Rong L."/>
            <person name="Tian Y."/>
            <person name="Yao Z."/>
            <person name="Fu G."/>
            <person name="Chen B."/>
            <person name="Fang R."/>
            <person name="Qiang B."/>
            <person name="Chen Z."/>
            <person name="Zhao G.-P."/>
            <person name="Tang J.-L."/>
            <person name="He C."/>
        </authorList>
    </citation>
    <scope>NUCLEOTIDE SEQUENCE [LARGE SCALE GENOMIC DNA]</scope>
    <source>
        <strain>8004</strain>
    </source>
</reference>
<evidence type="ECO:0000255" key="1">
    <source>
        <dbReference type="HAMAP-Rule" id="MF_01351"/>
    </source>
</evidence>
<protein>
    <recommendedName>
        <fullName evidence="1">NADH-quinone oxidoreductase subunit I</fullName>
        <ecNumber evidence="1">7.1.1.-</ecNumber>
    </recommendedName>
    <alternativeName>
        <fullName evidence="1">NADH dehydrogenase I subunit I</fullName>
    </alternativeName>
    <alternativeName>
        <fullName evidence="1">NDH-1 subunit I</fullName>
    </alternativeName>
</protein>
<name>NUOI_XANC8</name>
<gene>
    <name evidence="1" type="primary">nuoI</name>
    <name type="ordered locus">XC_1597</name>
</gene>